<accession>A4W8S1</accession>
<proteinExistence type="inferred from homology"/>
<dbReference type="EMBL" id="CP000653">
    <property type="protein sequence ID" value="ABP60101.1"/>
    <property type="molecule type" value="Genomic_DNA"/>
</dbReference>
<dbReference type="RefSeq" id="WP_012016818.1">
    <property type="nucleotide sequence ID" value="NC_009436.1"/>
</dbReference>
<dbReference type="SMR" id="A4W8S1"/>
<dbReference type="STRING" id="399742.Ent638_1421"/>
<dbReference type="KEGG" id="ent:Ent638_1421"/>
<dbReference type="eggNOG" id="COG0477">
    <property type="taxonomic scope" value="Bacteria"/>
</dbReference>
<dbReference type="HOGENOM" id="CLU_035018_1_2_6"/>
<dbReference type="OrthoDB" id="9810614at2"/>
<dbReference type="Proteomes" id="UP000000230">
    <property type="component" value="Chromosome"/>
</dbReference>
<dbReference type="GO" id="GO:0005886">
    <property type="term" value="C:plasma membrane"/>
    <property type="evidence" value="ECO:0007669"/>
    <property type="project" value="UniProtKB-SubCell"/>
</dbReference>
<dbReference type="GO" id="GO:0022857">
    <property type="term" value="F:transmembrane transporter activity"/>
    <property type="evidence" value="ECO:0007669"/>
    <property type="project" value="UniProtKB-UniRule"/>
</dbReference>
<dbReference type="CDD" id="cd17477">
    <property type="entry name" value="MFS_YcaD_like"/>
    <property type="match status" value="1"/>
</dbReference>
<dbReference type="FunFam" id="1.20.1250.20:FF:000041">
    <property type="entry name" value="Uncharacterized MFS-type transporter YcaD"/>
    <property type="match status" value="1"/>
</dbReference>
<dbReference type="FunFam" id="1.20.1250.20:FF:000066">
    <property type="entry name" value="Uncharacterized MFS-type transporter YcaD"/>
    <property type="match status" value="1"/>
</dbReference>
<dbReference type="Gene3D" id="1.20.1250.20">
    <property type="entry name" value="MFS general substrate transporter like domains"/>
    <property type="match status" value="2"/>
</dbReference>
<dbReference type="HAMAP" id="MF_01149">
    <property type="entry name" value="MFS_YcaD"/>
    <property type="match status" value="1"/>
</dbReference>
<dbReference type="InterPro" id="IPR011701">
    <property type="entry name" value="MFS"/>
</dbReference>
<dbReference type="InterPro" id="IPR020846">
    <property type="entry name" value="MFS_dom"/>
</dbReference>
<dbReference type="InterPro" id="IPR036259">
    <property type="entry name" value="MFS_trans_sf"/>
</dbReference>
<dbReference type="InterPro" id="IPR023745">
    <property type="entry name" value="MFS_YcaD"/>
</dbReference>
<dbReference type="InterPro" id="IPR047200">
    <property type="entry name" value="MFS_YcaD-like"/>
</dbReference>
<dbReference type="NCBIfam" id="NF002962">
    <property type="entry name" value="PRK03633.1"/>
    <property type="match status" value="1"/>
</dbReference>
<dbReference type="PANTHER" id="PTHR23521">
    <property type="entry name" value="TRANSPORTER MFS SUPERFAMILY"/>
    <property type="match status" value="1"/>
</dbReference>
<dbReference type="PANTHER" id="PTHR23521:SF2">
    <property type="entry name" value="TRANSPORTER MFS SUPERFAMILY"/>
    <property type="match status" value="1"/>
</dbReference>
<dbReference type="Pfam" id="PF07690">
    <property type="entry name" value="MFS_1"/>
    <property type="match status" value="1"/>
</dbReference>
<dbReference type="SUPFAM" id="SSF103473">
    <property type="entry name" value="MFS general substrate transporter"/>
    <property type="match status" value="1"/>
</dbReference>
<dbReference type="PROSITE" id="PS50850">
    <property type="entry name" value="MFS"/>
    <property type="match status" value="1"/>
</dbReference>
<sequence>MSTYSRPVLLLLCGLLLLTLAIAVLNTLVPLWLAHENLPTWQVGMVSSSYFTGNLLGTLLTGKLIKRFGFNRSYYLASLIFAAGCVGLGLMVGFWSWMTWRFIAGVGCAMIWVVVESALMCSGTSRNRGRLLAAYMMVYYVGTVLGQLMISKLPTDLMSVLPWVTGMVLAAILPLLFTRIVNQGSEHHEATQVWPMLRLRHARLGVNGCIISGIVLGSLYGLMPLYLNHQGVSDSGIGFWMAVMVSAGIVGQWPIGKLADRYGRLLVLRVQVFVVILGCLAMLGNAAMAPALFILGAAGFTLYPVAMAWACEKVENHQLVAMNQALLLSYTIGSLLGPTFTAMLMQNYSDNLLFIMIASVAFIYLLMLLRKAGEHPTPVAHA</sequence>
<reference key="1">
    <citation type="journal article" date="2010" name="PLoS Genet.">
        <title>Genome sequence of the plant growth promoting endophytic bacterium Enterobacter sp. 638.</title>
        <authorList>
            <person name="Taghavi S."/>
            <person name="van der Lelie D."/>
            <person name="Hoffman A."/>
            <person name="Zhang Y.B."/>
            <person name="Walla M.D."/>
            <person name="Vangronsveld J."/>
            <person name="Newman L."/>
            <person name="Monchy S."/>
        </authorList>
    </citation>
    <scope>NUCLEOTIDE SEQUENCE [LARGE SCALE GENOMIC DNA]</scope>
    <source>
        <strain>638</strain>
    </source>
</reference>
<organism>
    <name type="scientific">Enterobacter sp. (strain 638)</name>
    <dbReference type="NCBI Taxonomy" id="399742"/>
    <lineage>
        <taxon>Bacteria</taxon>
        <taxon>Pseudomonadati</taxon>
        <taxon>Pseudomonadota</taxon>
        <taxon>Gammaproteobacteria</taxon>
        <taxon>Enterobacterales</taxon>
        <taxon>Enterobacteriaceae</taxon>
        <taxon>Enterobacter</taxon>
    </lineage>
</organism>
<gene>
    <name type="ordered locus">Ent638_1421</name>
</gene>
<keyword id="KW-0997">Cell inner membrane</keyword>
<keyword id="KW-1003">Cell membrane</keyword>
<keyword id="KW-0472">Membrane</keyword>
<keyword id="KW-0812">Transmembrane</keyword>
<keyword id="KW-1133">Transmembrane helix</keyword>
<keyword id="KW-0813">Transport</keyword>
<evidence type="ECO:0000255" key="1">
    <source>
        <dbReference type="HAMAP-Rule" id="MF_01149"/>
    </source>
</evidence>
<protein>
    <recommendedName>
        <fullName evidence="1">Uncharacterized MFS-type transporter Ent638_1421</fullName>
    </recommendedName>
</protein>
<feature type="chain" id="PRO_1000065493" description="Uncharacterized MFS-type transporter Ent638_1421">
    <location>
        <begin position="1"/>
        <end position="382"/>
    </location>
</feature>
<feature type="transmembrane region" description="Helical" evidence="1">
    <location>
        <begin position="8"/>
        <end position="28"/>
    </location>
</feature>
<feature type="transmembrane region" description="Helical" evidence="1">
    <location>
        <begin position="39"/>
        <end position="61"/>
    </location>
</feature>
<feature type="transmembrane region" description="Helical" evidence="1">
    <location>
        <begin position="75"/>
        <end position="95"/>
    </location>
</feature>
<feature type="transmembrane region" description="Helical" evidence="1">
    <location>
        <begin position="102"/>
        <end position="122"/>
    </location>
</feature>
<feature type="transmembrane region" description="Helical" evidence="1">
    <location>
        <begin position="131"/>
        <end position="151"/>
    </location>
</feature>
<feature type="transmembrane region" description="Helical" evidence="1">
    <location>
        <begin position="157"/>
        <end position="177"/>
    </location>
</feature>
<feature type="transmembrane region" description="Helical" evidence="1">
    <location>
        <begin position="204"/>
        <end position="224"/>
    </location>
</feature>
<feature type="transmembrane region" description="Helical" evidence="1">
    <location>
        <begin position="236"/>
        <end position="256"/>
    </location>
</feature>
<feature type="transmembrane region" description="Helical" evidence="1">
    <location>
        <begin position="265"/>
        <end position="284"/>
    </location>
</feature>
<feature type="transmembrane region" description="Helical" evidence="1">
    <location>
        <begin position="289"/>
        <end position="311"/>
    </location>
</feature>
<feature type="transmembrane region" description="Helical" evidence="1">
    <location>
        <begin position="325"/>
        <end position="345"/>
    </location>
</feature>
<feature type="transmembrane region" description="Helical" evidence="1">
    <location>
        <begin position="349"/>
        <end position="369"/>
    </location>
</feature>
<name>Y1421_ENT38</name>
<comment type="subcellular location">
    <subcellularLocation>
        <location evidence="1">Cell inner membrane</location>
        <topology evidence="1">Multi-pass membrane protein</topology>
    </subcellularLocation>
</comment>
<comment type="similarity">
    <text evidence="1">Belongs to the major facilitator superfamily. YcaD (TC 2.A.1.26) family.</text>
</comment>